<feature type="chain" id="PRO_0000366717" description="Ribosomal RNA large subunit methyltransferase K/L">
    <location>
        <begin position="1"/>
        <end position="734"/>
    </location>
</feature>
<feature type="domain" description="THUMP" evidence="1">
    <location>
        <begin position="49"/>
        <end position="167"/>
    </location>
</feature>
<proteinExistence type="inferred from homology"/>
<sequence length="734" mass="83788">MNSPQRLSTYWVTCADGLETLLQQELQGLGIEQTERFAGRLIFQGSLEQAYRVCMWSRLASRVLKPIHTFELERTHDARDVAEELYEGALSFDWSLIFAPQSTFAIRLHVEREIKVNSQFATLRVKDGVVDSFMEAVGRRPSIDTKQPEITLFVLAGKTEHTYCLDLSGDSLHKRGYRHYMTDAPIKENLAAAILQKAKLTELKPDLILDPMCGSGTFIIESLMIFTDRAPGLVRRFGFNGWHGHDRELWLELKAEAAERHEIALQNTLPKFYAFDADWEAVKATRQNIIAAGFEKLLDQIQIEERTLADWPSFENTYNTAFVVTNPPYGERLGDKASNRALYLGLSALLQQYFPKQHAAVIAAQIEQADVLAFSEPETLRLMNGKLPIYIRLGQVKPVANSQPFLANWHADPVEIEGAQDFANRLQKNMSALKKWAVKDQVFCLRLYDADLPDFNVAVDLYGDRLHVQEYAPPKTIDPEKAKKRFNLALAAIRAVTGLPREAIFIKTRARQEGKNQYTKQSTASKRFIVQEGQAKILVNLTDYLDTGLFLDHRQIRLRIAQEARGKHFLNLFSYTSTASLHAALGGAASTTSVDLSNTYINWSKENFVLNGLTVDHADEQHMFFASDCFEWLKEGHEQYDLIFIDPPTFSNSKKFYGTFDIQRDHVSLLKRAMNRLSAEGTLYFSNNYRGFELDEEIDAIFYAQEITNDTIGPDFKRNQKIHRAWKIQHPHMN</sequence>
<name>RLMKL_ACIAD</name>
<comment type="function">
    <text evidence="1">Specifically methylates the guanine in position 2445 (m2G2445) and the guanine in position 2069 (m7G2069) of 23S rRNA.</text>
</comment>
<comment type="catalytic activity">
    <reaction evidence="1">
        <text>guanosine(2445) in 23S rRNA + S-adenosyl-L-methionine = N(2)-methylguanosine(2445) in 23S rRNA + S-adenosyl-L-homocysteine + H(+)</text>
        <dbReference type="Rhea" id="RHEA:42740"/>
        <dbReference type="Rhea" id="RHEA-COMP:10215"/>
        <dbReference type="Rhea" id="RHEA-COMP:10216"/>
        <dbReference type="ChEBI" id="CHEBI:15378"/>
        <dbReference type="ChEBI" id="CHEBI:57856"/>
        <dbReference type="ChEBI" id="CHEBI:59789"/>
        <dbReference type="ChEBI" id="CHEBI:74269"/>
        <dbReference type="ChEBI" id="CHEBI:74481"/>
        <dbReference type="EC" id="2.1.1.173"/>
    </reaction>
</comment>
<comment type="catalytic activity">
    <reaction evidence="1">
        <text>guanosine(2069) in 23S rRNA + S-adenosyl-L-methionine = N(2)-methylguanosine(2069) in 23S rRNA + S-adenosyl-L-homocysteine + H(+)</text>
        <dbReference type="Rhea" id="RHEA:43772"/>
        <dbReference type="Rhea" id="RHEA-COMP:10688"/>
        <dbReference type="Rhea" id="RHEA-COMP:10689"/>
        <dbReference type="ChEBI" id="CHEBI:15378"/>
        <dbReference type="ChEBI" id="CHEBI:57856"/>
        <dbReference type="ChEBI" id="CHEBI:59789"/>
        <dbReference type="ChEBI" id="CHEBI:74269"/>
        <dbReference type="ChEBI" id="CHEBI:74481"/>
        <dbReference type="EC" id="2.1.1.264"/>
    </reaction>
</comment>
<comment type="subcellular location">
    <subcellularLocation>
        <location evidence="1">Cytoplasm</location>
    </subcellularLocation>
</comment>
<comment type="similarity">
    <text evidence="1">Belongs to the methyltransferase superfamily. RlmKL family.</text>
</comment>
<keyword id="KW-0963">Cytoplasm</keyword>
<keyword id="KW-0489">Methyltransferase</keyword>
<keyword id="KW-0694">RNA-binding</keyword>
<keyword id="KW-0698">rRNA processing</keyword>
<keyword id="KW-0949">S-adenosyl-L-methionine</keyword>
<keyword id="KW-0808">Transferase</keyword>
<accession>Q6FCR7</accession>
<gene>
    <name evidence="1" type="primary">rlmL</name>
    <name type="ordered locus">ACIAD1268</name>
</gene>
<organism>
    <name type="scientific">Acinetobacter baylyi (strain ATCC 33305 / BD413 / ADP1)</name>
    <dbReference type="NCBI Taxonomy" id="62977"/>
    <lineage>
        <taxon>Bacteria</taxon>
        <taxon>Pseudomonadati</taxon>
        <taxon>Pseudomonadota</taxon>
        <taxon>Gammaproteobacteria</taxon>
        <taxon>Moraxellales</taxon>
        <taxon>Moraxellaceae</taxon>
        <taxon>Acinetobacter</taxon>
    </lineage>
</organism>
<protein>
    <recommendedName>
        <fullName evidence="1">Ribosomal RNA large subunit methyltransferase K/L</fullName>
    </recommendedName>
    <domain>
        <recommendedName>
            <fullName evidence="1">23S rRNA m2G2445 methyltransferase</fullName>
            <ecNumber evidence="1">2.1.1.173</ecNumber>
        </recommendedName>
        <alternativeName>
            <fullName evidence="1">rRNA (guanine-N(2)-)-methyltransferase RlmL</fullName>
        </alternativeName>
    </domain>
    <domain>
        <recommendedName>
            <fullName evidence="1">23S rRNA m7G2069 methyltransferase</fullName>
            <ecNumber evidence="1">2.1.1.264</ecNumber>
        </recommendedName>
        <alternativeName>
            <fullName evidence="1">rRNA (guanine-N(7)-)-methyltransferase RlmK</fullName>
        </alternativeName>
    </domain>
</protein>
<evidence type="ECO:0000255" key="1">
    <source>
        <dbReference type="HAMAP-Rule" id="MF_01858"/>
    </source>
</evidence>
<dbReference type="EC" id="2.1.1.173" evidence="1"/>
<dbReference type="EC" id="2.1.1.264" evidence="1"/>
<dbReference type="EMBL" id="CR543861">
    <property type="protein sequence ID" value="CAG68142.1"/>
    <property type="molecule type" value="Genomic_DNA"/>
</dbReference>
<dbReference type="RefSeq" id="WP_004925929.1">
    <property type="nucleotide sequence ID" value="NC_005966.1"/>
</dbReference>
<dbReference type="SMR" id="Q6FCR7"/>
<dbReference type="STRING" id="202950.GCA_001485005_01032"/>
<dbReference type="GeneID" id="45233690"/>
<dbReference type="KEGG" id="aci:ACIAD1268"/>
<dbReference type="eggNOG" id="COG0116">
    <property type="taxonomic scope" value="Bacteria"/>
</dbReference>
<dbReference type="eggNOG" id="COG1092">
    <property type="taxonomic scope" value="Bacteria"/>
</dbReference>
<dbReference type="HOGENOM" id="CLU_014042_2_0_6"/>
<dbReference type="OrthoDB" id="9809404at2"/>
<dbReference type="BioCyc" id="ASP62977:ACIAD_RS05835-MONOMER"/>
<dbReference type="Proteomes" id="UP000000430">
    <property type="component" value="Chromosome"/>
</dbReference>
<dbReference type="GO" id="GO:0005737">
    <property type="term" value="C:cytoplasm"/>
    <property type="evidence" value="ECO:0007669"/>
    <property type="project" value="UniProtKB-SubCell"/>
</dbReference>
<dbReference type="GO" id="GO:0052915">
    <property type="term" value="F:23S rRNA (guanine(2445)-N(2))-methyltransferase activity"/>
    <property type="evidence" value="ECO:0007669"/>
    <property type="project" value="UniProtKB-UniRule"/>
</dbReference>
<dbReference type="GO" id="GO:0003723">
    <property type="term" value="F:RNA binding"/>
    <property type="evidence" value="ECO:0007669"/>
    <property type="project" value="UniProtKB-KW"/>
</dbReference>
<dbReference type="GO" id="GO:0070043">
    <property type="term" value="F:rRNA (guanine-N7-)-methyltransferase activity"/>
    <property type="evidence" value="ECO:0007669"/>
    <property type="project" value="UniProtKB-UniRule"/>
</dbReference>
<dbReference type="CDD" id="cd02440">
    <property type="entry name" value="AdoMet_MTases"/>
    <property type="match status" value="1"/>
</dbReference>
<dbReference type="CDD" id="cd11715">
    <property type="entry name" value="THUMP_AdoMetMT"/>
    <property type="match status" value="1"/>
</dbReference>
<dbReference type="Gene3D" id="3.30.2130.30">
    <property type="match status" value="1"/>
</dbReference>
<dbReference type="Gene3D" id="3.30.750.80">
    <property type="entry name" value="RNA methyltransferase domain (HRMD) like"/>
    <property type="match status" value="1"/>
</dbReference>
<dbReference type="Gene3D" id="3.40.50.150">
    <property type="entry name" value="Vaccinia Virus protein VP39"/>
    <property type="match status" value="2"/>
</dbReference>
<dbReference type="HAMAP" id="MF_01858">
    <property type="entry name" value="23SrRNA_methyltr_KL"/>
    <property type="match status" value="1"/>
</dbReference>
<dbReference type="InterPro" id="IPR017244">
    <property type="entry name" value="23SrRNA_methyltr_KL"/>
</dbReference>
<dbReference type="InterPro" id="IPR002052">
    <property type="entry name" value="DNA_methylase_N6_adenine_CS"/>
</dbReference>
<dbReference type="InterPro" id="IPR000241">
    <property type="entry name" value="RlmKL-like_Mtase"/>
</dbReference>
<dbReference type="InterPro" id="IPR053943">
    <property type="entry name" value="RlmKL-like_Mtase_CS"/>
</dbReference>
<dbReference type="InterPro" id="IPR054170">
    <property type="entry name" value="RlmL_1st"/>
</dbReference>
<dbReference type="InterPro" id="IPR019614">
    <property type="entry name" value="SAM-dep_methyl-trfase"/>
</dbReference>
<dbReference type="InterPro" id="IPR029063">
    <property type="entry name" value="SAM-dependent_MTases_sf"/>
</dbReference>
<dbReference type="InterPro" id="IPR004114">
    <property type="entry name" value="THUMP_dom"/>
</dbReference>
<dbReference type="NCBIfam" id="NF008748">
    <property type="entry name" value="PRK11783.1"/>
    <property type="match status" value="1"/>
</dbReference>
<dbReference type="PANTHER" id="PTHR47313">
    <property type="entry name" value="RIBOSOMAL RNA LARGE SUBUNIT METHYLTRANSFERASE K/L"/>
    <property type="match status" value="1"/>
</dbReference>
<dbReference type="PANTHER" id="PTHR47313:SF1">
    <property type="entry name" value="RIBOSOMAL RNA LARGE SUBUNIT METHYLTRANSFERASE K_L"/>
    <property type="match status" value="1"/>
</dbReference>
<dbReference type="Pfam" id="PF10672">
    <property type="entry name" value="Methyltrans_SAM"/>
    <property type="match status" value="1"/>
</dbReference>
<dbReference type="Pfam" id="PF22020">
    <property type="entry name" value="RlmL_1st"/>
    <property type="match status" value="1"/>
</dbReference>
<dbReference type="Pfam" id="PF02926">
    <property type="entry name" value="THUMP"/>
    <property type="match status" value="1"/>
</dbReference>
<dbReference type="Pfam" id="PF01170">
    <property type="entry name" value="UPF0020"/>
    <property type="match status" value="1"/>
</dbReference>
<dbReference type="PIRSF" id="PIRSF037618">
    <property type="entry name" value="RNA_Mtase_bacteria_prd"/>
    <property type="match status" value="1"/>
</dbReference>
<dbReference type="PRINTS" id="PR00507">
    <property type="entry name" value="N12N6MTFRASE"/>
</dbReference>
<dbReference type="SMART" id="SM00981">
    <property type="entry name" value="THUMP"/>
    <property type="match status" value="1"/>
</dbReference>
<dbReference type="SUPFAM" id="SSF53335">
    <property type="entry name" value="S-adenosyl-L-methionine-dependent methyltransferases"/>
    <property type="match status" value="2"/>
</dbReference>
<dbReference type="PROSITE" id="PS51165">
    <property type="entry name" value="THUMP"/>
    <property type="match status" value="1"/>
</dbReference>
<dbReference type="PROSITE" id="PS01261">
    <property type="entry name" value="UPF0020"/>
    <property type="match status" value="1"/>
</dbReference>
<reference key="1">
    <citation type="journal article" date="2004" name="Nucleic Acids Res.">
        <title>Unique features revealed by the genome sequence of Acinetobacter sp. ADP1, a versatile and naturally transformation competent bacterium.</title>
        <authorList>
            <person name="Barbe V."/>
            <person name="Vallenet D."/>
            <person name="Fonknechten N."/>
            <person name="Kreimeyer A."/>
            <person name="Oztas S."/>
            <person name="Labarre L."/>
            <person name="Cruveiller S."/>
            <person name="Robert C."/>
            <person name="Duprat S."/>
            <person name="Wincker P."/>
            <person name="Ornston L.N."/>
            <person name="Weissenbach J."/>
            <person name="Marliere P."/>
            <person name="Cohen G.N."/>
            <person name="Medigue C."/>
        </authorList>
    </citation>
    <scope>NUCLEOTIDE SEQUENCE [LARGE SCALE GENOMIC DNA]</scope>
    <source>
        <strain>ATCC 33305 / BD413 / ADP1</strain>
    </source>
</reference>